<evidence type="ECO:0000250" key="1"/>
<evidence type="ECO:0000255" key="2">
    <source>
        <dbReference type="PROSITE-ProRule" id="PRU00465"/>
    </source>
</evidence>
<evidence type="ECO:0000255" key="3">
    <source>
        <dbReference type="PROSITE-ProRule" id="PRU00711"/>
    </source>
</evidence>
<evidence type="ECO:0000255" key="4">
    <source>
        <dbReference type="PROSITE-ProRule" id="PRU01004"/>
    </source>
</evidence>
<evidence type="ECO:0000255" key="5">
    <source>
        <dbReference type="PROSITE-ProRule" id="PRU01184"/>
    </source>
</evidence>
<evidence type="ECO:0000305" key="6"/>
<dbReference type="EC" id="1.17.1.9"/>
<dbReference type="EMBL" id="BX571857">
    <property type="protein sequence ID" value="CAG44012.1"/>
    <property type="molecule type" value="Genomic_DNA"/>
</dbReference>
<dbReference type="SMR" id="Q6G711"/>
<dbReference type="KEGG" id="sas:SAS2201"/>
<dbReference type="HOGENOM" id="CLU_000422_2_1_9"/>
<dbReference type="GO" id="GO:0016020">
    <property type="term" value="C:membrane"/>
    <property type="evidence" value="ECO:0007669"/>
    <property type="project" value="TreeGrafter"/>
</dbReference>
<dbReference type="GO" id="GO:0051537">
    <property type="term" value="F:2 iron, 2 sulfur cluster binding"/>
    <property type="evidence" value="ECO:0007669"/>
    <property type="project" value="UniProtKB-KW"/>
</dbReference>
<dbReference type="GO" id="GO:0051539">
    <property type="term" value="F:4 iron, 4 sulfur cluster binding"/>
    <property type="evidence" value="ECO:0007669"/>
    <property type="project" value="UniProtKB-KW"/>
</dbReference>
<dbReference type="GO" id="GO:0008863">
    <property type="term" value="F:formate dehydrogenase (NAD+) activity"/>
    <property type="evidence" value="ECO:0007669"/>
    <property type="project" value="UniProtKB-EC"/>
</dbReference>
<dbReference type="GO" id="GO:0046872">
    <property type="term" value="F:metal ion binding"/>
    <property type="evidence" value="ECO:0007669"/>
    <property type="project" value="UniProtKB-KW"/>
</dbReference>
<dbReference type="GO" id="GO:0043546">
    <property type="term" value="F:molybdopterin cofactor binding"/>
    <property type="evidence" value="ECO:0007669"/>
    <property type="project" value="InterPro"/>
</dbReference>
<dbReference type="GO" id="GO:0003954">
    <property type="term" value="F:NADH dehydrogenase activity"/>
    <property type="evidence" value="ECO:0007669"/>
    <property type="project" value="TreeGrafter"/>
</dbReference>
<dbReference type="GO" id="GO:0015942">
    <property type="term" value="P:formate metabolic process"/>
    <property type="evidence" value="ECO:0007669"/>
    <property type="project" value="InterPro"/>
</dbReference>
<dbReference type="GO" id="GO:0022904">
    <property type="term" value="P:respiratory electron transport chain"/>
    <property type="evidence" value="ECO:0007669"/>
    <property type="project" value="TreeGrafter"/>
</dbReference>
<dbReference type="CDD" id="cd00207">
    <property type="entry name" value="fer2"/>
    <property type="match status" value="1"/>
</dbReference>
<dbReference type="CDD" id="cd02792">
    <property type="entry name" value="MopB_CT_Formate-Dh-Na-like"/>
    <property type="match status" value="1"/>
</dbReference>
<dbReference type="CDD" id="cd02753">
    <property type="entry name" value="MopB_Formate-Dh-H"/>
    <property type="match status" value="1"/>
</dbReference>
<dbReference type="FunFam" id="2.20.25.90:FF:000001">
    <property type="entry name" value="Formate dehydrogenase subunit alpha"/>
    <property type="match status" value="1"/>
</dbReference>
<dbReference type="FunFam" id="3.10.20.740:FF:000003">
    <property type="entry name" value="Formate dehydrogenase subunit alpha"/>
    <property type="match status" value="1"/>
</dbReference>
<dbReference type="FunFam" id="3.40.228.10:FF:000002">
    <property type="entry name" value="Formate dehydrogenase subunit alpha"/>
    <property type="match status" value="1"/>
</dbReference>
<dbReference type="FunFam" id="3.30.70.20:FF:000032">
    <property type="entry name" value="Formate dehydrogenase, alpha subunit"/>
    <property type="match status" value="1"/>
</dbReference>
<dbReference type="FunFam" id="2.40.40.20:FF:000005">
    <property type="entry name" value="Periplasmic nitrate reductase"/>
    <property type="match status" value="1"/>
</dbReference>
<dbReference type="Gene3D" id="2.40.40.20">
    <property type="match status" value="1"/>
</dbReference>
<dbReference type="Gene3D" id="3.10.20.740">
    <property type="match status" value="1"/>
</dbReference>
<dbReference type="Gene3D" id="3.30.70.20">
    <property type="match status" value="1"/>
</dbReference>
<dbReference type="Gene3D" id="3.40.50.740">
    <property type="match status" value="1"/>
</dbReference>
<dbReference type="Gene3D" id="2.20.25.90">
    <property type="entry name" value="ADC-like domains"/>
    <property type="match status" value="1"/>
</dbReference>
<dbReference type="Gene3D" id="3.40.228.10">
    <property type="entry name" value="Dimethylsulfoxide Reductase, domain 2"/>
    <property type="match status" value="1"/>
</dbReference>
<dbReference type="InterPro" id="IPR036010">
    <property type="entry name" value="2Fe-2S_ferredoxin-like_sf"/>
</dbReference>
<dbReference type="InterPro" id="IPR001041">
    <property type="entry name" value="2Fe-2S_ferredoxin-type"/>
</dbReference>
<dbReference type="InterPro" id="IPR017896">
    <property type="entry name" value="4Fe4S_Fe-S-bd"/>
</dbReference>
<dbReference type="InterPro" id="IPR017900">
    <property type="entry name" value="4Fe4S_Fe_S_CS"/>
</dbReference>
<dbReference type="InterPro" id="IPR009010">
    <property type="entry name" value="Asp_de-COase-like_dom_sf"/>
</dbReference>
<dbReference type="InterPro" id="IPR041924">
    <property type="entry name" value="Formate_Dh-H_N"/>
</dbReference>
<dbReference type="InterPro" id="IPR006478">
    <property type="entry name" value="Formate_DH_asu"/>
</dbReference>
<dbReference type="InterPro" id="IPR006657">
    <property type="entry name" value="MoPterin_dinucl-bd_dom"/>
</dbReference>
<dbReference type="InterPro" id="IPR006656">
    <property type="entry name" value="Mopterin_OxRdtase"/>
</dbReference>
<dbReference type="InterPro" id="IPR006963">
    <property type="entry name" value="Mopterin_OxRdtase_4Fe-4S_dom"/>
</dbReference>
<dbReference type="InterPro" id="IPR006655">
    <property type="entry name" value="Mopterin_OxRdtase_prok_CS"/>
</dbReference>
<dbReference type="InterPro" id="IPR027467">
    <property type="entry name" value="MopterinOxRdtase_cofactor_BS"/>
</dbReference>
<dbReference type="InterPro" id="IPR019574">
    <property type="entry name" value="NADH_UbQ_OxRdtase_Gsu_4Fe4S-bd"/>
</dbReference>
<dbReference type="InterPro" id="IPR050123">
    <property type="entry name" value="Prok_molybdopt-oxidoreductase"/>
</dbReference>
<dbReference type="NCBIfam" id="TIGR01591">
    <property type="entry name" value="Fdh-alpha"/>
    <property type="match status" value="1"/>
</dbReference>
<dbReference type="PANTHER" id="PTHR43105:SF14">
    <property type="entry name" value="FORMATE DEHYDROGENASE H"/>
    <property type="match status" value="1"/>
</dbReference>
<dbReference type="PANTHER" id="PTHR43105">
    <property type="entry name" value="RESPIRATORY NITRATE REDUCTASE"/>
    <property type="match status" value="1"/>
</dbReference>
<dbReference type="Pfam" id="PF13510">
    <property type="entry name" value="Fer2_4"/>
    <property type="match status" value="1"/>
</dbReference>
<dbReference type="Pfam" id="PF12838">
    <property type="entry name" value="Fer4_7"/>
    <property type="match status" value="1"/>
</dbReference>
<dbReference type="Pfam" id="PF04879">
    <property type="entry name" value="Molybdop_Fe4S4"/>
    <property type="match status" value="1"/>
</dbReference>
<dbReference type="Pfam" id="PF00384">
    <property type="entry name" value="Molybdopterin"/>
    <property type="match status" value="1"/>
</dbReference>
<dbReference type="Pfam" id="PF01568">
    <property type="entry name" value="Molydop_binding"/>
    <property type="match status" value="1"/>
</dbReference>
<dbReference type="Pfam" id="PF10588">
    <property type="entry name" value="NADH-G_4Fe-4S_3"/>
    <property type="match status" value="1"/>
</dbReference>
<dbReference type="PIRSF" id="PIRSF036643">
    <property type="entry name" value="FDH_alpha"/>
    <property type="match status" value="1"/>
</dbReference>
<dbReference type="SMART" id="SM00926">
    <property type="entry name" value="Molybdop_Fe4S4"/>
    <property type="match status" value="1"/>
</dbReference>
<dbReference type="SMART" id="SM00929">
    <property type="entry name" value="NADH-G_4Fe-4S_3"/>
    <property type="match status" value="1"/>
</dbReference>
<dbReference type="SUPFAM" id="SSF54292">
    <property type="entry name" value="2Fe-2S ferredoxin-like"/>
    <property type="match status" value="1"/>
</dbReference>
<dbReference type="SUPFAM" id="SSF54862">
    <property type="entry name" value="4Fe-4S ferredoxins"/>
    <property type="match status" value="1"/>
</dbReference>
<dbReference type="SUPFAM" id="SSF50692">
    <property type="entry name" value="ADC-like"/>
    <property type="match status" value="1"/>
</dbReference>
<dbReference type="SUPFAM" id="SSF53706">
    <property type="entry name" value="Formate dehydrogenase/DMSO reductase, domains 1-3"/>
    <property type="match status" value="1"/>
</dbReference>
<dbReference type="PROSITE" id="PS51085">
    <property type="entry name" value="2FE2S_FER_2"/>
    <property type="match status" value="1"/>
</dbReference>
<dbReference type="PROSITE" id="PS00198">
    <property type="entry name" value="4FE4S_FER_1"/>
    <property type="match status" value="1"/>
</dbReference>
<dbReference type="PROSITE" id="PS51379">
    <property type="entry name" value="4FE4S_FER_2"/>
    <property type="match status" value="2"/>
</dbReference>
<dbReference type="PROSITE" id="PS51839">
    <property type="entry name" value="4FE4S_HC3"/>
    <property type="match status" value="1"/>
</dbReference>
<dbReference type="PROSITE" id="PS51669">
    <property type="entry name" value="4FE4S_MOW_BIS_MGD"/>
    <property type="match status" value="1"/>
</dbReference>
<dbReference type="PROSITE" id="PS00551">
    <property type="entry name" value="MOLYBDOPTERIN_PROK_1"/>
    <property type="match status" value="1"/>
</dbReference>
<dbReference type="PROSITE" id="PS00932">
    <property type="entry name" value="MOLYBDOPTERIN_PROK_3"/>
    <property type="match status" value="1"/>
</dbReference>
<protein>
    <recommendedName>
        <fullName>Putative formate dehydrogenase SAS2201</fullName>
        <ecNumber>1.17.1.9</ecNumber>
    </recommendedName>
</protein>
<sequence>MQEHLVVTLDGKDYLVEPGTNLLEFIKSQDTFVPSICYNESMGPIQTCDTCTVEIDGKIERSCSTVIDRPMTVNTVNNDVKDAQKEALDRILEKHMLYCTVCDYNNGDCEIHNTMDAWGLQHQTYEYKEKPYEKDYGPFYRYDPNQCILCGRCVEACQDIEVNETIRIDWDREHPRVIWDNDVPINESSCVSCGQCATVCPCNAMMEVNMEGNAGYMTDTEPGSLAAMIDLTKKAEPGYGPLFAISDSEAEMRKERIKKTKTVCTYCGVGCSFEVWTKDREILKVQPSHDSPANKIATCVKGKFSWGHINSDQRLTKPLVRKNGEFHEVEWDEALNVIADNFTSIKEKYGPDALSFISSSKATNEESYLMQKLARQVIGTNNVDNCSRYCQAPATKGLFRTVGHGGDSGSIEDLEKAAMSVLIGTNTAEAHPVIASRMKRAQKLFGQKIHVFDIRKHEMAERADRFYQPKPGTDLAWLSAVTKYIIDHDLHDKAFIDEWVDDFDEYYKSLETFTMAFAEEATGIPESELIKFAEECAKAESVVICWAMGITQQDIGSDSSTAISNLLLVTGNYRRPGTGAYPLRGHNNVQGCSDMGSMPDKITGYQSIEADDIRAKFEKEYGVKLNPKAGKDNHEMVEGIHDGEVHSLYLYGEDTGIVDSNINFVQAAFEKLDFMVVQDEFLTFTATYADVVLPASPSLEKDGTFTNTERRIQRLYQALEPLGDSKPDWKIFQAIANRLGFDWNYKHPSEIMDEVARLTPLYAGVSYDRLEGFNSLQWPVQPDGTDEPILYLEGFNFDNGKAKLFPLSFDNYFKQDEIYDIHVNNGRLLEHFHEGNMTYQTPMIKYKVPRAFVEISPELAEDRGIHEGAEVKLISETGEAVLQVHVTDRVKGKEIYIPLNNDAMENGDLGAINLLTNSDVDQYTDTPSYKRTSCRLEVITKRGKSPLNPNNFRVNKKRHPQYSVQVQKKWERSDYVFPGNQVDK</sequence>
<feature type="chain" id="PRO_0000304131" description="Putative formate dehydrogenase SAS2201">
    <location>
        <begin position="1"/>
        <end position="984"/>
    </location>
</feature>
<feature type="domain" description="2Fe-2S ferredoxin-type" evidence="2">
    <location>
        <begin position="3"/>
        <end position="79"/>
    </location>
</feature>
<feature type="domain" description="4Fe-4S His(Cys)3-ligated-type" evidence="5">
    <location>
        <begin position="79"/>
        <end position="119"/>
    </location>
</feature>
<feature type="domain" description="4Fe-4S ferredoxin-type 1" evidence="3">
    <location>
        <begin position="138"/>
        <end position="165"/>
    </location>
</feature>
<feature type="domain" description="4Fe-4S ferredoxin-type 2" evidence="3">
    <location>
        <begin position="181"/>
        <end position="211"/>
    </location>
</feature>
<feature type="domain" description="4Fe-4S Mo/W bis-MGD-type" evidence="4">
    <location>
        <begin position="257"/>
        <end position="313"/>
    </location>
</feature>
<feature type="region of interest" description="Formate dehydrogenase">
    <location>
        <begin position="252"/>
        <end position="984"/>
    </location>
</feature>
<feature type="binding site" evidence="1">
    <location>
        <position position="37"/>
    </location>
    <ligand>
        <name>[2Fe-2S] cluster</name>
        <dbReference type="ChEBI" id="CHEBI:190135"/>
    </ligand>
</feature>
<feature type="binding site" evidence="1">
    <location>
        <position position="48"/>
    </location>
    <ligand>
        <name>[2Fe-2S] cluster</name>
        <dbReference type="ChEBI" id="CHEBI:190135"/>
    </ligand>
</feature>
<feature type="binding site" evidence="1">
    <location>
        <position position="51"/>
    </location>
    <ligand>
        <name>[2Fe-2S] cluster</name>
        <dbReference type="ChEBI" id="CHEBI:190135"/>
    </ligand>
</feature>
<feature type="binding site" evidence="1">
    <location>
        <position position="63"/>
    </location>
    <ligand>
        <name>[2Fe-2S] cluster</name>
        <dbReference type="ChEBI" id="CHEBI:190135"/>
    </ligand>
</feature>
<feature type="binding site" evidence="5">
    <location>
        <position position="95"/>
    </location>
    <ligand>
        <name>[4Fe-4S] cluster</name>
        <dbReference type="ChEBI" id="CHEBI:49883"/>
        <label>1</label>
    </ligand>
</feature>
<feature type="binding site" evidence="5">
    <location>
        <position position="99"/>
    </location>
    <ligand>
        <name>[4Fe-4S] cluster</name>
        <dbReference type="ChEBI" id="CHEBI:49883"/>
        <label>1</label>
    </ligand>
</feature>
<feature type="binding site" evidence="5">
    <location>
        <position position="102"/>
    </location>
    <ligand>
        <name>[4Fe-4S] cluster</name>
        <dbReference type="ChEBI" id="CHEBI:49883"/>
        <label>1</label>
    </ligand>
</feature>
<feature type="binding site" evidence="5">
    <location>
        <position position="109"/>
    </location>
    <ligand>
        <name>[4Fe-4S] cluster</name>
        <dbReference type="ChEBI" id="CHEBI:49883"/>
        <label>1</label>
    </ligand>
</feature>
<feature type="binding site" evidence="1">
    <location>
        <position position="147"/>
    </location>
    <ligand>
        <name>[4Fe-4S] cluster</name>
        <dbReference type="ChEBI" id="CHEBI:49883"/>
        <label>2</label>
    </ligand>
</feature>
<feature type="binding site" evidence="1">
    <location>
        <position position="150"/>
    </location>
    <ligand>
        <name>[4Fe-4S] cluster</name>
        <dbReference type="ChEBI" id="CHEBI:49883"/>
        <label>2</label>
    </ligand>
</feature>
<feature type="binding site" evidence="1">
    <location>
        <position position="153"/>
    </location>
    <ligand>
        <name>[4Fe-4S] cluster</name>
        <dbReference type="ChEBI" id="CHEBI:49883"/>
        <label>2</label>
    </ligand>
</feature>
<feature type="binding site" evidence="1">
    <location>
        <position position="157"/>
    </location>
    <ligand>
        <name>[4Fe-4S] cluster</name>
        <dbReference type="ChEBI" id="CHEBI:49883"/>
        <label>3</label>
    </ligand>
</feature>
<feature type="binding site" evidence="1">
    <location>
        <position position="190"/>
    </location>
    <ligand>
        <name>[4Fe-4S] cluster</name>
        <dbReference type="ChEBI" id="CHEBI:49883"/>
        <label>3</label>
    </ligand>
</feature>
<feature type="binding site" evidence="1">
    <location>
        <position position="193"/>
    </location>
    <ligand>
        <name>[4Fe-4S] cluster</name>
        <dbReference type="ChEBI" id="CHEBI:49883"/>
        <label>3</label>
    </ligand>
</feature>
<feature type="binding site" evidence="1">
    <location>
        <position position="196"/>
    </location>
    <ligand>
        <name>[4Fe-4S] cluster</name>
        <dbReference type="ChEBI" id="CHEBI:49883"/>
        <label>3</label>
    </ligand>
</feature>
<feature type="binding site" evidence="1">
    <location>
        <position position="200"/>
    </location>
    <ligand>
        <name>[4Fe-4S] cluster</name>
        <dbReference type="ChEBI" id="CHEBI:49883"/>
        <label>2</label>
    </ligand>
</feature>
<feature type="binding site" evidence="1">
    <location>
        <position position="264"/>
    </location>
    <ligand>
        <name>[4Fe-4S] cluster</name>
        <dbReference type="ChEBI" id="CHEBI:49883"/>
        <label>4</label>
    </ligand>
</feature>
<feature type="binding site" evidence="1">
    <location>
        <position position="267"/>
    </location>
    <ligand>
        <name>[4Fe-4S] cluster</name>
        <dbReference type="ChEBI" id="CHEBI:49883"/>
        <label>4</label>
    </ligand>
</feature>
<feature type="binding site" evidence="1">
    <location>
        <position position="271"/>
    </location>
    <ligand>
        <name>[4Fe-4S] cluster</name>
        <dbReference type="ChEBI" id="CHEBI:49883"/>
        <label>4</label>
    </ligand>
</feature>
<feature type="binding site" evidence="1">
    <location>
        <position position="299"/>
    </location>
    <ligand>
        <name>[4Fe-4S] cluster</name>
        <dbReference type="ChEBI" id="CHEBI:49883"/>
        <label>4</label>
    </ligand>
</feature>
<organism>
    <name type="scientific">Staphylococcus aureus (strain MSSA476)</name>
    <dbReference type="NCBI Taxonomy" id="282459"/>
    <lineage>
        <taxon>Bacteria</taxon>
        <taxon>Bacillati</taxon>
        <taxon>Bacillota</taxon>
        <taxon>Bacilli</taxon>
        <taxon>Bacillales</taxon>
        <taxon>Staphylococcaceae</taxon>
        <taxon>Staphylococcus</taxon>
    </lineage>
</organism>
<name>FDHL_STAAS</name>
<accession>Q6G711</accession>
<gene>
    <name type="ordered locus">SAS2201</name>
</gene>
<comment type="catalytic activity">
    <reaction>
        <text>formate + NAD(+) = CO2 + NADH</text>
        <dbReference type="Rhea" id="RHEA:15985"/>
        <dbReference type="ChEBI" id="CHEBI:15740"/>
        <dbReference type="ChEBI" id="CHEBI:16526"/>
        <dbReference type="ChEBI" id="CHEBI:57540"/>
        <dbReference type="ChEBI" id="CHEBI:57945"/>
        <dbReference type="EC" id="1.17.1.9"/>
    </reaction>
</comment>
<comment type="cofactor">
    <cofactor evidence="1">
        <name>[2Fe-2S] cluster</name>
        <dbReference type="ChEBI" id="CHEBI:190135"/>
    </cofactor>
    <text evidence="1">Binds 1 [2Fe-2S] cluster.</text>
</comment>
<comment type="cofactor">
    <cofactor evidence="1">
        <name>[4Fe-4S] cluster</name>
        <dbReference type="ChEBI" id="CHEBI:49883"/>
    </cofactor>
    <text evidence="1">Binds 4 [4Fe-4S] clusters.</text>
</comment>
<comment type="cofactor">
    <cofactor evidence="1">
        <name>Mo-bis(molybdopterin guanine dinucleotide)</name>
        <dbReference type="ChEBI" id="CHEBI:60539"/>
    </cofactor>
    <text evidence="1">Binds 1 molybdenum-bis(molybdopterin guanine dinucleotide) (Mo-bis-MGD) cofactor per subunit.</text>
</comment>
<comment type="similarity">
    <text evidence="6">In the C-terminal section; belongs to the prokaryotic molybdopterin-containing oxidoreductase family.</text>
</comment>
<keyword id="KW-0001">2Fe-2S</keyword>
<keyword id="KW-0004">4Fe-4S</keyword>
<keyword id="KW-0408">Iron</keyword>
<keyword id="KW-0411">Iron-sulfur</keyword>
<keyword id="KW-0479">Metal-binding</keyword>
<keyword id="KW-0500">Molybdenum</keyword>
<keyword id="KW-0520">NAD</keyword>
<keyword id="KW-0560">Oxidoreductase</keyword>
<keyword id="KW-0677">Repeat</keyword>
<proteinExistence type="inferred from homology"/>
<reference key="1">
    <citation type="journal article" date="2004" name="Proc. Natl. Acad. Sci. U.S.A.">
        <title>Complete genomes of two clinical Staphylococcus aureus strains: evidence for the rapid evolution of virulence and drug resistance.</title>
        <authorList>
            <person name="Holden M.T.G."/>
            <person name="Feil E.J."/>
            <person name="Lindsay J.A."/>
            <person name="Peacock S.J."/>
            <person name="Day N.P.J."/>
            <person name="Enright M.C."/>
            <person name="Foster T.J."/>
            <person name="Moore C.E."/>
            <person name="Hurst L."/>
            <person name="Atkin R."/>
            <person name="Barron A."/>
            <person name="Bason N."/>
            <person name="Bentley S.D."/>
            <person name="Chillingworth C."/>
            <person name="Chillingworth T."/>
            <person name="Churcher C."/>
            <person name="Clark L."/>
            <person name="Corton C."/>
            <person name="Cronin A."/>
            <person name="Doggett J."/>
            <person name="Dowd L."/>
            <person name="Feltwell T."/>
            <person name="Hance Z."/>
            <person name="Harris B."/>
            <person name="Hauser H."/>
            <person name="Holroyd S."/>
            <person name="Jagels K."/>
            <person name="James K.D."/>
            <person name="Lennard N."/>
            <person name="Line A."/>
            <person name="Mayes R."/>
            <person name="Moule S."/>
            <person name="Mungall K."/>
            <person name="Ormond D."/>
            <person name="Quail M.A."/>
            <person name="Rabbinowitsch E."/>
            <person name="Rutherford K.M."/>
            <person name="Sanders M."/>
            <person name="Sharp S."/>
            <person name="Simmonds M."/>
            <person name="Stevens K."/>
            <person name="Whitehead S."/>
            <person name="Barrell B.G."/>
            <person name="Spratt B.G."/>
            <person name="Parkhill J."/>
        </authorList>
    </citation>
    <scope>NUCLEOTIDE SEQUENCE [LARGE SCALE GENOMIC DNA]</scope>
    <source>
        <strain>MSSA476</strain>
    </source>
</reference>